<sequence length="373" mass="41433">MKVANGYEYTAIMEKIAPKKLAMEGDPIGLQVGDLSRKVRKIMFTLDVLEEVVDEAIEKKVDLIIAHHPFLYRPTQHIDTTTKQGKMIKKLIKHDITVFAAHTNLDIAQGGVNNILADLLHLQNTTMIEETYSEPYCKIAVYVPENELESVRLALVNNGAGQIGTEYTECTFHTTGIGSFKPGANANPTIGEKDALTSVPEVKIEAIFPQYLTETITKAVKIAHPYEEPAIDVYTLEMQTYKEGLGRVGMLPKKLGMVSFIDKLKTAFAIDNVRFIGDLKTTVHKVAIIGGDGNKFIHQAKSTGADVFITGDVYYHTGHDLLAINLPTIDAGHNIEKVMKGYLKNKMEEQAKILDYEAEFIVSEVNTDPFQFC</sequence>
<organism>
    <name type="scientific">Listeria monocytogenes serovar 1/2a (strain ATCC BAA-679 / EGD-e)</name>
    <dbReference type="NCBI Taxonomy" id="169963"/>
    <lineage>
        <taxon>Bacteria</taxon>
        <taxon>Bacillati</taxon>
        <taxon>Bacillota</taxon>
        <taxon>Bacilli</taxon>
        <taxon>Bacillales</taxon>
        <taxon>Listeriaceae</taxon>
        <taxon>Listeria</taxon>
    </lineage>
</organism>
<dbReference type="EMBL" id="U17284">
    <property type="protein sequence ID" value="AAA62502.1"/>
    <property type="molecule type" value="Genomic_DNA"/>
</dbReference>
<dbReference type="EMBL" id="AL591979">
    <property type="protein sequence ID" value="CAC99530.1"/>
    <property type="molecule type" value="Genomic_DNA"/>
</dbReference>
<dbReference type="PIR" id="AD1256">
    <property type="entry name" value="AD1256"/>
</dbReference>
<dbReference type="RefSeq" id="NP_464977.1">
    <property type="nucleotide sequence ID" value="NC_003210.1"/>
</dbReference>
<dbReference type="RefSeq" id="WP_010990128.1">
    <property type="nucleotide sequence ID" value="NZ_CP149495.1"/>
</dbReference>
<dbReference type="SMR" id="P53434"/>
<dbReference type="STRING" id="169963.gene:17594109"/>
<dbReference type="PaxDb" id="169963-lmo1452"/>
<dbReference type="EnsemblBacteria" id="CAC99530">
    <property type="protein sequence ID" value="CAC99530"/>
    <property type="gene ID" value="CAC99530"/>
</dbReference>
<dbReference type="GeneID" id="986883"/>
<dbReference type="KEGG" id="lmo:lmo1452"/>
<dbReference type="PATRIC" id="fig|169963.11.peg.1491"/>
<dbReference type="eggNOG" id="COG0327">
    <property type="taxonomic scope" value="Bacteria"/>
</dbReference>
<dbReference type="HOGENOM" id="CLU_037423_1_0_9"/>
<dbReference type="OrthoDB" id="9792792at2"/>
<dbReference type="PhylomeDB" id="P53434"/>
<dbReference type="BioCyc" id="LMON169963:LMO1452-MONOMER"/>
<dbReference type="Proteomes" id="UP000000817">
    <property type="component" value="Chromosome"/>
</dbReference>
<dbReference type="GO" id="GO:0005737">
    <property type="term" value="C:cytoplasm"/>
    <property type="evidence" value="ECO:0000318"/>
    <property type="project" value="GO_Central"/>
</dbReference>
<dbReference type="GO" id="GO:0046872">
    <property type="term" value="F:metal ion binding"/>
    <property type="evidence" value="ECO:0007669"/>
    <property type="project" value="UniProtKB-KW"/>
</dbReference>
<dbReference type="FunFam" id="3.40.1390.30:FF:000001">
    <property type="entry name" value="GTP cyclohydrolase 1 type 2"/>
    <property type="match status" value="1"/>
</dbReference>
<dbReference type="FunFam" id="3.30.70.120:FF:000006">
    <property type="entry name" value="GTP cyclohydrolase 1 type 2 homolog"/>
    <property type="match status" value="1"/>
</dbReference>
<dbReference type="Gene3D" id="3.30.70.120">
    <property type="match status" value="1"/>
</dbReference>
<dbReference type="Gene3D" id="3.40.1390.30">
    <property type="entry name" value="NIF3 (NGG1p interacting factor 3)-like"/>
    <property type="match status" value="1"/>
</dbReference>
<dbReference type="InterPro" id="IPR002678">
    <property type="entry name" value="DUF34/NIF3"/>
</dbReference>
<dbReference type="InterPro" id="IPR017221">
    <property type="entry name" value="DUF34/NIF3_bac"/>
</dbReference>
<dbReference type="InterPro" id="IPR036069">
    <property type="entry name" value="DUF34/NIF3_sf"/>
</dbReference>
<dbReference type="InterPro" id="IPR015867">
    <property type="entry name" value="N-reg_PII/ATP_PRibTrfase_C"/>
</dbReference>
<dbReference type="NCBIfam" id="TIGR00486">
    <property type="entry name" value="YbgI_SA1388"/>
    <property type="match status" value="1"/>
</dbReference>
<dbReference type="PANTHER" id="PTHR13799:SF14">
    <property type="entry name" value="GTP CYCLOHYDROLASE 1 TYPE 2 HOMOLOG"/>
    <property type="match status" value="1"/>
</dbReference>
<dbReference type="PANTHER" id="PTHR13799">
    <property type="entry name" value="NGG1 INTERACTING FACTOR 3"/>
    <property type="match status" value="1"/>
</dbReference>
<dbReference type="Pfam" id="PF01784">
    <property type="entry name" value="DUF34_NIF3"/>
    <property type="match status" value="1"/>
</dbReference>
<dbReference type="PIRSF" id="PIRSF037489">
    <property type="entry name" value="UCP037489_NIF3_YqfO"/>
    <property type="match status" value="1"/>
</dbReference>
<dbReference type="SUPFAM" id="SSF102705">
    <property type="entry name" value="NIF3 (NGG1p interacting factor 3)-like"/>
    <property type="match status" value="1"/>
</dbReference>
<evidence type="ECO:0000250" key="1">
    <source>
        <dbReference type="UniProtKB" id="P0AFP6"/>
    </source>
</evidence>
<evidence type="ECO:0000305" key="2"/>
<accession>P53434</accession>
<feature type="chain" id="PRO_0000147315" description="GTP cyclohydrolase 1 type 2 homolog">
    <location>
        <begin position="1"/>
        <end position="373"/>
    </location>
</feature>
<feature type="binding site" evidence="1">
    <location>
        <position position="67"/>
    </location>
    <ligand>
        <name>a divalent metal cation</name>
        <dbReference type="ChEBI" id="CHEBI:60240"/>
        <label>1</label>
    </ligand>
</feature>
<feature type="binding site" evidence="1">
    <location>
        <position position="68"/>
    </location>
    <ligand>
        <name>a divalent metal cation</name>
        <dbReference type="ChEBI" id="CHEBI:60240"/>
        <label>2</label>
    </ligand>
</feature>
<feature type="binding site" evidence="1">
    <location>
        <position position="106"/>
    </location>
    <ligand>
        <name>a divalent metal cation</name>
        <dbReference type="ChEBI" id="CHEBI:60240"/>
        <label>1</label>
    </ligand>
</feature>
<feature type="binding site" evidence="1">
    <location>
        <position position="333"/>
    </location>
    <ligand>
        <name>a divalent metal cation</name>
        <dbReference type="ChEBI" id="CHEBI:60240"/>
        <label>2</label>
    </ligand>
</feature>
<feature type="binding site" evidence="1">
    <location>
        <position position="336"/>
    </location>
    <ligand>
        <name>a divalent metal cation</name>
        <dbReference type="ChEBI" id="CHEBI:60240"/>
        <label>1</label>
    </ligand>
</feature>
<feature type="binding site" evidence="1">
    <location>
        <position position="336"/>
    </location>
    <ligand>
        <name>a divalent metal cation</name>
        <dbReference type="ChEBI" id="CHEBI:60240"/>
        <label>2</label>
    </ligand>
</feature>
<protein>
    <recommendedName>
        <fullName>GTP cyclohydrolase 1 type 2 homolog</fullName>
    </recommendedName>
</protein>
<proteinExistence type="inferred from homology"/>
<name>GCH1L_LISMO</name>
<comment type="subunit">
    <text evidence="1">Homohexamer.</text>
</comment>
<comment type="similarity">
    <text evidence="2">Belongs to the GTP cyclohydrolase I type 2/NIF3 family.</text>
</comment>
<gene>
    <name type="ordered locus">lmo1452</name>
</gene>
<reference key="1">
    <citation type="submission" date="1995-03" db="EMBL/GenBank/DDBJ databases">
        <authorList>
            <person name="Klarsfeld A.D."/>
            <person name="Cossart P."/>
        </authorList>
    </citation>
    <scope>NUCLEOTIDE SEQUENCE [GENOMIC DNA]</scope>
    <source>
        <strain>LO28 / Serovar 1/2c</strain>
    </source>
</reference>
<reference key="2">
    <citation type="journal article" date="2001" name="Science">
        <title>Comparative genomics of Listeria species.</title>
        <authorList>
            <person name="Glaser P."/>
            <person name="Frangeul L."/>
            <person name="Buchrieser C."/>
            <person name="Rusniok C."/>
            <person name="Amend A."/>
            <person name="Baquero F."/>
            <person name="Berche P."/>
            <person name="Bloecker H."/>
            <person name="Brandt P."/>
            <person name="Chakraborty T."/>
            <person name="Charbit A."/>
            <person name="Chetouani F."/>
            <person name="Couve E."/>
            <person name="de Daruvar A."/>
            <person name="Dehoux P."/>
            <person name="Domann E."/>
            <person name="Dominguez-Bernal G."/>
            <person name="Duchaud E."/>
            <person name="Durant L."/>
            <person name="Dussurget O."/>
            <person name="Entian K.-D."/>
            <person name="Fsihi H."/>
            <person name="Garcia-del Portillo F."/>
            <person name="Garrido P."/>
            <person name="Gautier L."/>
            <person name="Goebel W."/>
            <person name="Gomez-Lopez N."/>
            <person name="Hain T."/>
            <person name="Hauf J."/>
            <person name="Jackson D."/>
            <person name="Jones L.-M."/>
            <person name="Kaerst U."/>
            <person name="Kreft J."/>
            <person name="Kuhn M."/>
            <person name="Kunst F."/>
            <person name="Kurapkat G."/>
            <person name="Madueno E."/>
            <person name="Maitournam A."/>
            <person name="Mata Vicente J."/>
            <person name="Ng E."/>
            <person name="Nedjari H."/>
            <person name="Nordsiek G."/>
            <person name="Novella S."/>
            <person name="de Pablos B."/>
            <person name="Perez-Diaz J.-C."/>
            <person name="Purcell R."/>
            <person name="Remmel B."/>
            <person name="Rose M."/>
            <person name="Schlueter T."/>
            <person name="Simoes N."/>
            <person name="Tierrez A."/>
            <person name="Vazquez-Boland J.-A."/>
            <person name="Voss H."/>
            <person name="Wehland J."/>
            <person name="Cossart P."/>
        </authorList>
    </citation>
    <scope>NUCLEOTIDE SEQUENCE [LARGE SCALE GENOMIC DNA]</scope>
    <source>
        <strain>ATCC BAA-679 / EGD-e</strain>
    </source>
</reference>
<keyword id="KW-0479">Metal-binding</keyword>
<keyword id="KW-1185">Reference proteome</keyword>